<comment type="function">
    <text evidence="4">FAD-linked oxidoreductase; part of the gene cluster that mediates the biosynthesis of flavoglaucin and congeners (including aspergin, dihydroauroglaucin and auroglaucin), prenylated salicylaldehyde derivatives carrying a saturated or an unsaturated C-7 side chain (PubMed:32134669). The PKS fogA releases the carboxylic acid (8E,10E,12E)-3,5,7-trihydroxytetradeca-8,10,12-trienoic acid as its product, as well as derivatives with one and two double bonds (PubMed:32134669). FogA is indeed able to reduce the initial triketide, thus being at least partially responsible for the differently saturated heptyl side chains of flavoglaucin congeners (PubMed:32134669). The oxidoreductases fogB, fogC and fogD modify the nascent polyketide in fogA-bound form and, together, fogA, fogB, fogC and fogD are necessary for the formation of the aromatic core and the cyclized PKS products are released as salicyl alcohols (PubMed:32134669). In particular, fogB is responsible for oxidation of a hydroxyl group or reduction of remaining double bond(s) at the C-7 residue whereas fogD is probably involved in the reductive release of the modified PKS products (PubMed:32134669). The cytochrome P450 monooxygenase fogE is then responsible for the hydroxylation at C-3 of the benzene ring (PubMed:32134669). The fogE products are substrates of the prenyltransferase fogH and the prenylated benzyl alcohols are subsequently oxidized by the fogF to produce the final aryl aldehydes flavoglaucin and congeners (PubMed:32134669). The short-chain dehydrogenase fogG does not seem to be involved in the biosynthesis of the prenylated salicylaldehyde derivatives (PubMed:32134669).</text>
</comment>
<comment type="cofactor">
    <cofactor evidence="1">
        <name>FAD</name>
        <dbReference type="ChEBI" id="CHEBI:57692"/>
    </cofactor>
</comment>
<comment type="pathway">
    <text evidence="4">Secondary metabolite biosynthesis.</text>
</comment>
<comment type="disruption phenotype">
    <text evidence="4">Leads to the accumulation of the prenylated benzyl alcohols produced by fogH.</text>
</comment>
<comment type="similarity">
    <text evidence="6">Belongs to the oxygen-dependent FAD-linked oxidoreductase family.</text>
</comment>
<protein>
    <recommendedName>
        <fullName evidence="5">FAD-linked oxidoreductase fogF</fullName>
        <ecNumber evidence="4">1.-.-.-</ecNumber>
    </recommendedName>
    <alternativeName>
        <fullName evidence="5">Flavoglaucin biosynthesis cluster protein F</fullName>
    </alternativeName>
</protein>
<organism>
    <name type="scientific">Aspergillus ruber (strain CBS 135680)</name>
    <dbReference type="NCBI Taxonomy" id="1388766"/>
    <lineage>
        <taxon>Eukaryota</taxon>
        <taxon>Fungi</taxon>
        <taxon>Dikarya</taxon>
        <taxon>Ascomycota</taxon>
        <taxon>Pezizomycotina</taxon>
        <taxon>Eurotiomycetes</taxon>
        <taxon>Eurotiomycetidae</taxon>
        <taxon>Eurotiales</taxon>
        <taxon>Aspergillaceae</taxon>
        <taxon>Aspergillus</taxon>
        <taxon>Aspergillus subgen. Aspergillus</taxon>
    </lineage>
</organism>
<sequence>MRRNILTALACSWLTAHAASVDLKSLLLESDIQWASDTVISFSDTPEFEDATVRWNSYNAPTYAGAISPADEEDVVKVVKLAKEHNVPFLATGGRHGCTDMVGLQEGLAIDLSQINSYEVDSDDATVTVGAGSTFGQFQNAIHDAGFMIQSGSVTCPGFIGITLGGGIGRYTGIFGLEIDALISARIVTADGEVLTISETENAELFWGVRGAGFNFGIVTSATYKLHKLADNNNGEILTADFIIPANKTLFYFDWLESLGETMPPNAAGVSRFQFDSIAKEGQIGANWVFIGPEDEGREFLSPILDLQPSVAMLSYVPWNKLIETAGGGQGAMLCEARAPRSLFTGQMRKYTALTLQETFDKITTLWETHPGLAYTSLNFEAFPNHAAVAVPDDATAYPWRDAIGWFQFEIISLEGVGSDSFNAGEHAGQVLRDSWVRTSGYDNHTIYVNYARGDETLEQKYGASKLPRLAALKKKYDPDNVFGWNNALPTEYPGSG</sequence>
<evidence type="ECO:0000250" key="1">
    <source>
        <dbReference type="UniProtKB" id="Q5BEJ5"/>
    </source>
</evidence>
<evidence type="ECO:0000255" key="2"/>
<evidence type="ECO:0000255" key="3">
    <source>
        <dbReference type="PROSITE-ProRule" id="PRU00718"/>
    </source>
</evidence>
<evidence type="ECO:0000269" key="4">
    <source>
    </source>
</evidence>
<evidence type="ECO:0000303" key="5">
    <source>
    </source>
</evidence>
<evidence type="ECO:0000305" key="6"/>
<gene>
    <name evidence="5" type="primary">fogF</name>
    <name type="ORF">EURHEDRAFT_412154</name>
</gene>
<accession>A0A017SGC7</accession>
<reference key="1">
    <citation type="journal article" date="2014" name="Nat. Commun.">
        <title>Genomic adaptations of the halophilic Dead Sea filamentous fungus Eurotium rubrum.</title>
        <authorList>
            <person name="Kis-Papo T."/>
            <person name="Weig A.R."/>
            <person name="Riley R."/>
            <person name="Persoh D."/>
            <person name="Salamov A."/>
            <person name="Sun H."/>
            <person name="Lipzen A."/>
            <person name="Wasser S.P."/>
            <person name="Rambold G."/>
            <person name="Grigoriev I.V."/>
            <person name="Nevo E."/>
        </authorList>
    </citation>
    <scope>NUCLEOTIDE SEQUENCE [LARGE SCALE GENOMIC DNA]</scope>
    <source>
        <strain>CBS 135680</strain>
    </source>
</reference>
<reference key="2">
    <citation type="journal article" date="2020" name="Org. Lett.">
        <title>Biosynthesis of the prenylated salicylaldehyde flavoglaucin requires temporary reduction to salicyl alcohol for decoration before reoxidation to the final product.</title>
        <authorList>
            <person name="Nies J."/>
            <person name="Ran H."/>
            <person name="Wohlgemuth V."/>
            <person name="Yin W.B."/>
            <person name="Li S.M."/>
        </authorList>
    </citation>
    <scope>FUNCTION</scope>
    <scope>DISRUPTION PHENOTYPE</scope>
    <scope>CATALYTIC ACTIVITY</scope>
    <scope>PATHWAY</scope>
</reference>
<name>FOGF_ASPRC</name>
<dbReference type="EC" id="1.-.-.-" evidence="4"/>
<dbReference type="EMBL" id="KK088422">
    <property type="protein sequence ID" value="EYE95340.1"/>
    <property type="molecule type" value="Genomic_DNA"/>
</dbReference>
<dbReference type="SMR" id="A0A017SGC7"/>
<dbReference type="HOGENOM" id="CLU_018354_10_0_1"/>
<dbReference type="OrthoDB" id="415825at2759"/>
<dbReference type="Proteomes" id="UP000019804">
    <property type="component" value="Unassembled WGS sequence"/>
</dbReference>
<dbReference type="GO" id="GO:0071949">
    <property type="term" value="F:FAD binding"/>
    <property type="evidence" value="ECO:0007669"/>
    <property type="project" value="InterPro"/>
</dbReference>
<dbReference type="GO" id="GO:0016491">
    <property type="term" value="F:oxidoreductase activity"/>
    <property type="evidence" value="ECO:0007669"/>
    <property type="project" value="UniProtKB-KW"/>
</dbReference>
<dbReference type="Gene3D" id="3.30.465.10">
    <property type="match status" value="1"/>
</dbReference>
<dbReference type="Gene3D" id="3.40.462.20">
    <property type="match status" value="1"/>
</dbReference>
<dbReference type="InterPro" id="IPR012951">
    <property type="entry name" value="BBE"/>
</dbReference>
<dbReference type="InterPro" id="IPR016166">
    <property type="entry name" value="FAD-bd_PCMH"/>
</dbReference>
<dbReference type="InterPro" id="IPR036318">
    <property type="entry name" value="FAD-bd_PCMH-like_sf"/>
</dbReference>
<dbReference type="InterPro" id="IPR016169">
    <property type="entry name" value="FAD-bd_PCMH_sub2"/>
</dbReference>
<dbReference type="InterPro" id="IPR050416">
    <property type="entry name" value="FAD-linked_Oxidoreductase"/>
</dbReference>
<dbReference type="InterPro" id="IPR006094">
    <property type="entry name" value="Oxid_FAD_bind_N"/>
</dbReference>
<dbReference type="PANTHER" id="PTHR42973">
    <property type="entry name" value="BINDING OXIDOREDUCTASE, PUTATIVE (AFU_ORTHOLOGUE AFUA_1G17690)-RELATED"/>
    <property type="match status" value="1"/>
</dbReference>
<dbReference type="PANTHER" id="PTHR42973:SF32">
    <property type="entry name" value="FAD-LINKED OXIDOREDUCTASE AFOF"/>
    <property type="match status" value="1"/>
</dbReference>
<dbReference type="Pfam" id="PF08031">
    <property type="entry name" value="BBE"/>
    <property type="match status" value="1"/>
</dbReference>
<dbReference type="Pfam" id="PF01565">
    <property type="entry name" value="FAD_binding_4"/>
    <property type="match status" value="1"/>
</dbReference>
<dbReference type="SUPFAM" id="SSF56176">
    <property type="entry name" value="FAD-binding/transporter-associated domain-like"/>
    <property type="match status" value="1"/>
</dbReference>
<dbReference type="PROSITE" id="PS51387">
    <property type="entry name" value="FAD_PCMH"/>
    <property type="match status" value="1"/>
</dbReference>
<proteinExistence type="evidence at protein level"/>
<keyword id="KW-0274">FAD</keyword>
<keyword id="KW-0285">Flavoprotein</keyword>
<keyword id="KW-0560">Oxidoreductase</keyword>
<keyword id="KW-1185">Reference proteome</keyword>
<keyword id="KW-0732">Signal</keyword>
<feature type="signal peptide" evidence="2">
    <location>
        <begin position="1"/>
        <end position="18"/>
    </location>
</feature>
<feature type="chain" id="PRO_5001499206" description="FAD-linked oxidoreductase fogF">
    <location>
        <begin position="19"/>
        <end position="497"/>
    </location>
</feature>
<feature type="domain" description="FAD-binding PCMH-type" evidence="3">
    <location>
        <begin position="59"/>
        <end position="229"/>
    </location>
</feature>